<keyword id="KW-0378">Hydrolase</keyword>
<keyword id="KW-0479">Metal-binding</keyword>
<keyword id="KW-0482">Metalloprotease</keyword>
<keyword id="KW-0645">Protease</keyword>
<keyword id="KW-1185">Reference proteome</keyword>
<keyword id="KW-0862">Zinc</keyword>
<organism>
    <name type="scientific">Synechocystis sp. (strain ATCC 27184 / PCC 6803 / Kazusa)</name>
    <dbReference type="NCBI Taxonomy" id="1111708"/>
    <lineage>
        <taxon>Bacteria</taxon>
        <taxon>Bacillati</taxon>
        <taxon>Cyanobacteriota</taxon>
        <taxon>Cyanophyceae</taxon>
        <taxon>Synechococcales</taxon>
        <taxon>Merismopediaceae</taxon>
        <taxon>Synechocystis</taxon>
    </lineage>
</organism>
<sequence>MSYSLRIADLPEDERPREKLLKYGAKHLGNAELIAILLATGQGKGKLSAVGLGQYILQQLGQNRQDPMDVLRNIHPQELIAFPGIGPAKATTILAAVELGKRVFQSRPLEKMVVDSPEAAAIALSQDLMWQTQEHFAIVMLDVKNRLLATKVITIGTATETLIHPREIFREVIKQGATRLIVAHNHPSGGLEPSPEDIRLTEFLLQGAQYLQIPVLDHLILGHGKHQSLRQCTDLWERFPQGD</sequence>
<dbReference type="EMBL" id="BA000022">
    <property type="protein sequence ID" value="BAA10123.1"/>
    <property type="molecule type" value="Genomic_DNA"/>
</dbReference>
<dbReference type="PIR" id="S76271">
    <property type="entry name" value="S76271"/>
</dbReference>
<dbReference type="SMR" id="P52601"/>
<dbReference type="FunCoup" id="P52601">
    <property type="interactions" value="190"/>
</dbReference>
<dbReference type="IntAct" id="P52601">
    <property type="interactions" value="2"/>
</dbReference>
<dbReference type="STRING" id="1148.gene:10499615"/>
<dbReference type="PaxDb" id="1148-1001498"/>
<dbReference type="EnsemblBacteria" id="BAA10123">
    <property type="protein sequence ID" value="BAA10123"/>
    <property type="gene ID" value="BAA10123"/>
</dbReference>
<dbReference type="KEGG" id="syn:sll0766"/>
<dbReference type="eggNOG" id="COG2003">
    <property type="taxonomic scope" value="Bacteria"/>
</dbReference>
<dbReference type="InParanoid" id="P52601"/>
<dbReference type="PhylomeDB" id="P52601"/>
<dbReference type="Proteomes" id="UP000001425">
    <property type="component" value="Chromosome"/>
</dbReference>
<dbReference type="GO" id="GO:0046872">
    <property type="term" value="F:metal ion binding"/>
    <property type="evidence" value="ECO:0007669"/>
    <property type="project" value="UniProtKB-KW"/>
</dbReference>
<dbReference type="GO" id="GO:0008237">
    <property type="term" value="F:metallopeptidase activity"/>
    <property type="evidence" value="ECO:0007669"/>
    <property type="project" value="UniProtKB-KW"/>
</dbReference>
<dbReference type="GO" id="GO:0006508">
    <property type="term" value="P:proteolysis"/>
    <property type="evidence" value="ECO:0007669"/>
    <property type="project" value="UniProtKB-KW"/>
</dbReference>
<dbReference type="CDD" id="cd08071">
    <property type="entry name" value="MPN_DUF2466"/>
    <property type="match status" value="1"/>
</dbReference>
<dbReference type="Gene3D" id="3.40.140.10">
    <property type="entry name" value="Cytidine Deaminase, domain 2"/>
    <property type="match status" value="1"/>
</dbReference>
<dbReference type="InterPro" id="IPR037518">
    <property type="entry name" value="MPN"/>
</dbReference>
<dbReference type="InterPro" id="IPR025657">
    <property type="entry name" value="RadC_JAB"/>
</dbReference>
<dbReference type="InterPro" id="IPR001405">
    <property type="entry name" value="UPF0758"/>
</dbReference>
<dbReference type="InterPro" id="IPR020891">
    <property type="entry name" value="UPF0758_CS"/>
</dbReference>
<dbReference type="InterPro" id="IPR046778">
    <property type="entry name" value="UPF0758_N"/>
</dbReference>
<dbReference type="NCBIfam" id="NF000642">
    <property type="entry name" value="PRK00024.1"/>
    <property type="match status" value="1"/>
</dbReference>
<dbReference type="NCBIfam" id="TIGR00608">
    <property type="entry name" value="radc"/>
    <property type="match status" value="1"/>
</dbReference>
<dbReference type="PANTHER" id="PTHR30471">
    <property type="entry name" value="DNA REPAIR PROTEIN RADC"/>
    <property type="match status" value="1"/>
</dbReference>
<dbReference type="PANTHER" id="PTHR30471:SF3">
    <property type="entry name" value="UPF0758 PROTEIN YEES-RELATED"/>
    <property type="match status" value="1"/>
</dbReference>
<dbReference type="Pfam" id="PF04002">
    <property type="entry name" value="RadC"/>
    <property type="match status" value="1"/>
</dbReference>
<dbReference type="Pfam" id="PF20582">
    <property type="entry name" value="UPF0758_N"/>
    <property type="match status" value="1"/>
</dbReference>
<dbReference type="PROSITE" id="PS50249">
    <property type="entry name" value="MPN"/>
    <property type="match status" value="1"/>
</dbReference>
<dbReference type="PROSITE" id="PS01302">
    <property type="entry name" value="UPF0758"/>
    <property type="match status" value="1"/>
</dbReference>
<evidence type="ECO:0000255" key="1">
    <source>
        <dbReference type="PROSITE-ProRule" id="PRU01182"/>
    </source>
</evidence>
<evidence type="ECO:0000305" key="2"/>
<name>Y766_SYNY3</name>
<reference key="1">
    <citation type="journal article" date="1995" name="DNA Res.">
        <title>Sequence analysis of the genome of the unicellular cyanobacterium Synechocystis sp. strain PCC6803. I. Sequence features in the 1 Mb region from map positions 64% to 92% of the genome.</title>
        <authorList>
            <person name="Kaneko T."/>
            <person name="Tanaka A."/>
            <person name="Sato S."/>
            <person name="Kotani H."/>
            <person name="Sazuka T."/>
            <person name="Miyajima N."/>
            <person name="Sugiura M."/>
            <person name="Tabata S."/>
        </authorList>
    </citation>
    <scope>NUCLEOTIDE SEQUENCE [LARGE SCALE GENOMIC DNA]</scope>
    <source>
        <strain>ATCC 27184 / PCC 6803 / N-1</strain>
    </source>
</reference>
<reference key="2">
    <citation type="journal article" date="1996" name="DNA Res.">
        <title>Sequence analysis of the genome of the unicellular cyanobacterium Synechocystis sp. strain PCC6803. II. Sequence determination of the entire genome and assignment of potential protein-coding regions.</title>
        <authorList>
            <person name="Kaneko T."/>
            <person name="Sato S."/>
            <person name="Kotani H."/>
            <person name="Tanaka A."/>
            <person name="Asamizu E."/>
            <person name="Nakamura Y."/>
            <person name="Miyajima N."/>
            <person name="Hirosawa M."/>
            <person name="Sugiura M."/>
            <person name="Sasamoto S."/>
            <person name="Kimura T."/>
            <person name="Hosouchi T."/>
            <person name="Matsuno A."/>
            <person name="Muraki A."/>
            <person name="Nakazaki N."/>
            <person name="Naruo K."/>
            <person name="Okumura S."/>
            <person name="Shimpo S."/>
            <person name="Takeuchi C."/>
            <person name="Wada T."/>
            <person name="Watanabe A."/>
            <person name="Yamada M."/>
            <person name="Yasuda M."/>
            <person name="Tabata S."/>
        </authorList>
    </citation>
    <scope>NUCLEOTIDE SEQUENCE [LARGE SCALE GENOMIC DNA]</scope>
    <source>
        <strain>ATCC 27184 / PCC 6803 / Kazusa</strain>
    </source>
</reference>
<accession>P52601</accession>
<gene>
    <name type="ordered locus">sll0766</name>
</gene>
<protein>
    <recommendedName>
        <fullName>UPF0758 protein sll0766</fullName>
    </recommendedName>
</protein>
<feature type="chain" id="PRO_0000190746" description="UPF0758 protein sll0766">
    <location>
        <begin position="1"/>
        <end position="243"/>
    </location>
</feature>
<feature type="domain" description="MPN" evidence="1">
    <location>
        <begin position="113"/>
        <end position="235"/>
    </location>
</feature>
<feature type="short sequence motif" description="JAMM motif" evidence="1">
    <location>
        <begin position="184"/>
        <end position="197"/>
    </location>
</feature>
<feature type="binding site" evidence="1">
    <location>
        <position position="184"/>
    </location>
    <ligand>
        <name>Zn(2+)</name>
        <dbReference type="ChEBI" id="CHEBI:29105"/>
        <note>catalytic</note>
    </ligand>
</feature>
<feature type="binding site" evidence="1">
    <location>
        <position position="186"/>
    </location>
    <ligand>
        <name>Zn(2+)</name>
        <dbReference type="ChEBI" id="CHEBI:29105"/>
        <note>catalytic</note>
    </ligand>
</feature>
<feature type="binding site" evidence="1">
    <location>
        <position position="197"/>
    </location>
    <ligand>
        <name>Zn(2+)</name>
        <dbReference type="ChEBI" id="CHEBI:29105"/>
        <note>catalytic</note>
    </ligand>
</feature>
<comment type="similarity">
    <text evidence="2">Belongs to the UPF0758 family.</text>
</comment>
<proteinExistence type="inferred from homology"/>